<comment type="function">
    <text evidence="2">Essential factor for the assembly of mitochondrial NADH:ubiquinone oxidoreductase complex (complex I).</text>
</comment>
<comment type="subunit">
    <text evidence="2">Interacts with NDUFAF4, NDUFS2 and NDUFS3.</text>
</comment>
<comment type="interaction">
    <interactant intactId="EBI-2114801">
        <id>Q9BU61</id>
    </interactant>
    <interactant intactId="EBI-11522760">
        <id>Q6RW13-2</id>
        <label>AGTRAP</label>
    </interactant>
    <organismsDiffer>false</organismsDiffer>
    <experiments>3</experiments>
</comment>
<comment type="interaction">
    <interactant intactId="EBI-2114801">
        <id>Q9BU61</id>
    </interactant>
    <interactant intactId="EBI-12011224">
        <id>Q9NPB3</id>
        <label>CABP2</label>
    </interactant>
    <organismsDiffer>false</organismsDiffer>
    <experiments>3</experiments>
</comment>
<comment type="interaction">
    <interactant intactId="EBI-2114801">
        <id>Q9BU61</id>
    </interactant>
    <interactant intactId="EBI-3867333">
        <id>A8MQ03</id>
        <label>CYSRT1</label>
    </interactant>
    <organismsDiffer>false</organismsDiffer>
    <experiments>3</experiments>
</comment>
<comment type="interaction">
    <interactant intactId="EBI-2114801">
        <id>Q9BU61</id>
    </interactant>
    <interactant intactId="EBI-5916454">
        <id>A6NEM1</id>
        <label>GOLGA6L9</label>
    </interactant>
    <organismsDiffer>false</organismsDiffer>
    <experiments>3</experiments>
</comment>
<comment type="interaction">
    <interactant intactId="EBI-2114801">
        <id>Q9BU61</id>
    </interactant>
    <interactant intactId="EBI-6509505">
        <id>Q0VD86</id>
        <label>INCA1</label>
    </interactant>
    <organismsDiffer>false</organismsDiffer>
    <experiments>3</experiments>
</comment>
<comment type="interaction">
    <interactant intactId="EBI-2114801">
        <id>Q9BU61</id>
    </interactant>
    <interactant intactId="EBI-3044087">
        <id>Q7Z3Y8</id>
        <label>KRT27</label>
    </interactant>
    <organismsDiffer>false</organismsDiffer>
    <experiments>3</experiments>
</comment>
<comment type="interaction">
    <interactant intactId="EBI-2114801">
        <id>Q9BU61</id>
    </interactant>
    <interactant intactId="EBI-12516603">
        <id>Q8WWY6</id>
        <label>MBD3L1</label>
    </interactant>
    <organismsDiffer>false</organismsDiffer>
    <experiments>3</experiments>
</comment>
<comment type="interaction">
    <interactant intactId="EBI-2114801">
        <id>Q9BU61</id>
    </interactant>
    <interactant intactId="EBI-2606839">
        <id>Q9P032</id>
        <label>NDUFAF4</label>
    </interactant>
    <organismsDiffer>false</organismsDiffer>
    <experiments>12</experiments>
</comment>
<comment type="interaction">
    <interactant intactId="EBI-2114801">
        <id>Q9BU61</id>
    </interactant>
    <interactant intactId="EBI-943588">
        <id>Q16633</id>
        <label>POU2AF1</label>
    </interactant>
    <organismsDiffer>false</organismsDiffer>
    <experiments>3</experiments>
</comment>
<comment type="interaction">
    <interactant intactId="EBI-2114801">
        <id>Q9BU61</id>
    </interactant>
    <interactant intactId="EBI-2340624">
        <id>Q9BYM8</id>
        <label>RBCK1</label>
    </interactant>
    <organismsDiffer>false</organismsDiffer>
    <experiments>3</experiments>
</comment>
<comment type="interaction">
    <interactant intactId="EBI-2114801">
        <id>Q9BU61</id>
    </interactant>
    <interactant intactId="EBI-11750630">
        <id>Q9NTX7-2</id>
        <label>RNF146</label>
    </interactant>
    <organismsDiffer>false</organismsDiffer>
    <experiments>3</experiments>
</comment>
<comment type="interaction">
    <interactant intactId="EBI-2114801">
        <id>Q9BU61</id>
    </interactant>
    <interactant intactId="EBI-607085">
        <id>P09012</id>
        <label>SNRPA</label>
    </interactant>
    <organismsDiffer>false</organismsDiffer>
    <experiments>6</experiments>
</comment>
<comment type="interaction">
    <interactant intactId="EBI-2114801">
        <id>Q9BU61</id>
    </interactant>
    <interactant intactId="EBI-12157345">
        <id>Q8TAS1-2</id>
        <label>UHMK1</label>
    </interactant>
    <organismsDiffer>false</organismsDiffer>
    <experiments>3</experiments>
</comment>
<comment type="interaction">
    <interactant intactId="EBI-10298649">
        <id>Q9BU61-2</id>
    </interactant>
    <interactant intactId="EBI-2606839">
        <id>Q9P032</id>
        <label>NDUFAF4</label>
    </interactant>
    <organismsDiffer>false</organismsDiffer>
    <experiments>8</experiments>
</comment>
<comment type="interaction">
    <interactant intactId="EBI-10298649">
        <id>Q9BU61-2</id>
    </interactant>
    <interactant intactId="EBI-2340624">
        <id>Q9BYM8</id>
        <label>RBCK1</label>
    </interactant>
    <organismsDiffer>false</organismsDiffer>
    <experiments>3</experiments>
</comment>
<comment type="interaction">
    <interactant intactId="EBI-10298649">
        <id>Q9BU61-2</id>
    </interactant>
    <interactant intactId="EBI-307352">
        <id>Q04864</id>
        <label>REL</label>
    </interactant>
    <organismsDiffer>false</organismsDiffer>
    <experiments>3</experiments>
</comment>
<comment type="interaction">
    <interactant intactId="EBI-10298649">
        <id>Q9BU61-2</id>
    </interactant>
    <interactant intactId="EBI-607085">
        <id>P09012</id>
        <label>SNRPA</label>
    </interactant>
    <organismsDiffer>false</organismsDiffer>
    <experiments>3</experiments>
</comment>
<comment type="subcellular location">
    <subcellularLocation>
        <location evidence="1">Nucleus</location>
    </subcellularLocation>
    <subcellularLocation>
        <location evidence="2">Mitochondrion inner membrane</location>
    </subcellularLocation>
</comment>
<comment type="alternative products">
    <event type="alternative splicing"/>
    <isoform>
        <id>Q9BU61-1</id>
        <name>a</name>
        <sequence type="displayed"/>
    </isoform>
    <isoform>
        <id>Q9BU61-2</id>
        <name>b</name>
        <sequence type="described" ref="VSP_041086"/>
    </isoform>
</comment>
<comment type="disease" evidence="2 3">
    <disease id="DI-05415">
        <name>Mitochondrial complex I deficiency, nuclear type 18</name>
        <acronym>MC1DN18</acronym>
        <description>A form of mitochondrial complex I deficiency, the most common biochemical signature of mitochondrial disorders, a group of highly heterogeneous conditions characterized by defective oxidative phosphorylation, which collectively affects 1 in 5-10000 live births. Clinical disorders have variable severity, ranging from lethal neonatal disease to adult-onset neurodegenerative disorders. Phenotypes include macrocephaly with progressive leukodystrophy, non-specific encephalopathy, cardiomyopathy, myopathy, liver disease, Leigh syndrome, Leber hereditary optic neuropathy, and some forms of Parkinson disease. MC1DN18 transmission pattern is consistent with autosomal recessive inheritance.</description>
        <dbReference type="MIM" id="618240"/>
    </disease>
    <text>The disease is caused by variants affecting the gene represented in this entry.</text>
</comment>
<comment type="similarity">
    <text evidence="5">Belongs to the NDUFAF3 family.</text>
</comment>
<reference key="1">
    <citation type="journal article" date="2004" name="Genome Res.">
        <title>The status, quality, and expansion of the NIH full-length cDNA project: the Mammalian Gene Collection (MGC).</title>
        <authorList>
            <consortium name="The MGC Project Team"/>
        </authorList>
    </citation>
    <scope>NUCLEOTIDE SEQUENCE [LARGE SCALE MRNA] (ISOFORMS A AND B)</scope>
    <source>
        <tissue>Lung</tissue>
        <tissue>Testis</tissue>
    </source>
</reference>
<reference key="2">
    <citation type="journal article" date="2009" name="Am. J. Hum. Genet.">
        <title>Mutations in NDUFAF3 (C3ORF60), encoding an NDUFAF4 (C6ORF66)-interacting complex I assembly protein, cause fatal neonatal mitochondrial disease.</title>
        <authorList>
            <person name="Saada A."/>
            <person name="Vogel R.O."/>
            <person name="Hoefs S.J."/>
            <person name="van den Brand M.A."/>
            <person name="Wessels H.J."/>
            <person name="Willems P.H."/>
            <person name="Venselaar H."/>
            <person name="Shaag A."/>
            <person name="Barghuti F."/>
            <person name="Reish O."/>
            <person name="Shohat M."/>
            <person name="Huynen M.A."/>
            <person name="Smeitink J.A.M."/>
            <person name="van den Heuvel L.P."/>
            <person name="Nijtmans L.G."/>
        </authorList>
    </citation>
    <scope>FUNCTION</scope>
    <scope>INTERACTION WITH NDUFAF4; NDUFS2 AND NDUFS3</scope>
    <scope>SUBCELLULAR LOCATION</scope>
    <scope>INVOLVEMENT IN MC1DN18</scope>
    <scope>VARIANTS MC1DN18 ARG-77 AND PRO-122</scope>
</reference>
<reference key="3">
    <citation type="journal article" date="2011" name="BMC Syst. Biol.">
        <title>Initial characterization of the human central proteome.</title>
        <authorList>
            <person name="Burkard T.R."/>
            <person name="Planyavsky M."/>
            <person name="Kaupe I."/>
            <person name="Breitwieser F.P."/>
            <person name="Buerckstuemmer T."/>
            <person name="Bennett K.L."/>
            <person name="Superti-Furga G."/>
            <person name="Colinge J."/>
        </authorList>
    </citation>
    <scope>IDENTIFICATION BY MASS SPECTROMETRY [LARGE SCALE ANALYSIS]</scope>
</reference>
<reference key="4">
    <citation type="journal article" date="2014" name="J. Proteomics">
        <title>An enzyme assisted RP-RPLC approach for in-depth analysis of human liver phosphoproteome.</title>
        <authorList>
            <person name="Bian Y."/>
            <person name="Song C."/>
            <person name="Cheng K."/>
            <person name="Dong M."/>
            <person name="Wang F."/>
            <person name="Huang J."/>
            <person name="Sun D."/>
            <person name="Wang L."/>
            <person name="Ye M."/>
            <person name="Zou H."/>
        </authorList>
    </citation>
    <scope>IDENTIFICATION BY MASS SPECTROMETRY [LARGE SCALE ANALYSIS]</scope>
    <source>
        <tissue>Liver</tissue>
    </source>
</reference>
<reference key="5">
    <citation type="journal article" date="2015" name="Proteomics">
        <title>N-terminome analysis of the human mitochondrial proteome.</title>
        <authorList>
            <person name="Vaca Jacome A.S."/>
            <person name="Rabilloud T."/>
            <person name="Schaeffer-Reiss C."/>
            <person name="Rompais M."/>
            <person name="Ayoub D."/>
            <person name="Lane L."/>
            <person name="Bairoch A."/>
            <person name="Van Dorsselaer A."/>
            <person name="Carapito C."/>
        </authorList>
    </citation>
    <scope>IDENTIFICATION BY MASS SPECTROMETRY [LARGE SCALE ANALYSIS]</scope>
</reference>
<reference key="6">
    <citation type="journal article" date="2017" name="Mol. Genet. Metab.">
        <title>Mutations in mitochondrial complex I assembly factor NDUFAF3 cause Leigh syndrome.</title>
        <authorList>
            <person name="Baertling F."/>
            <person name="Sanchez-Caballero L."/>
            <person name="Timal S."/>
            <person name="van den Brand M.A."/>
            <person name="Ngu L.H."/>
            <person name="Distelmaier F."/>
            <person name="Rodenburg R.J."/>
            <person name="Nijtmans L.G."/>
        </authorList>
    </citation>
    <scope>INVOLVEMENT IN MC1DN18</scope>
    <scope>VARIANT MC1DN18 VAL-165</scope>
</reference>
<protein>
    <recommendedName>
        <fullName>NADH dehydrogenase [ubiquinone] 1 alpha subcomplex assembly factor 3</fullName>
    </recommendedName>
</protein>
<feature type="chain" id="PRO_0000281154" description="NADH dehydrogenase [ubiquinone] 1 alpha subcomplex assembly factor 3">
    <location>
        <begin position="1"/>
        <end position="184"/>
    </location>
</feature>
<feature type="splice variant" id="VSP_041086" description="In isoform b." evidence="4">
    <location>
        <begin position="1"/>
        <end position="57"/>
    </location>
</feature>
<feature type="sequence variant" id="VAR_058491" description="In MC1DN18; dbSNP:rs121918134." evidence="2">
    <original>G</original>
    <variation>R</variation>
    <location>
        <position position="77"/>
    </location>
</feature>
<feature type="sequence variant" id="VAR_058492" description="In MC1DN18; dbSNP:rs121918135." evidence="2">
    <original>R</original>
    <variation>P</variation>
    <location>
        <position position="122"/>
    </location>
</feature>
<feature type="sequence variant" id="VAR_081425" description="In MC1DN18; dbSNP:rs138275059." evidence="3">
    <original>A</original>
    <variation>V</variation>
    <location>
        <position position="165"/>
    </location>
</feature>
<gene>
    <name type="primary">NDUFAF3</name>
    <name type="synonym">C3orf60</name>
</gene>
<name>NDUF3_HUMAN</name>
<sequence>MATALALRSLYRARPSLRCPPVELPWAPRRGHRLSPADDELYQRTRISLLQREAAQAMYIDSYNSRGFMINGNRVLGPCALLPHSVVQWNVGSHQDITEDSFSLFWLLEPRIEIVVVGTGDRTERLQSQVLQAMRQRGIAVEVQDTPNACATFNFLCHEGRVTGAALIPPPGGTSLTSLGQAAQ</sequence>
<keyword id="KW-0025">Alternative splicing</keyword>
<keyword id="KW-0225">Disease variant</keyword>
<keyword id="KW-0472">Membrane</keyword>
<keyword id="KW-0496">Mitochondrion</keyword>
<keyword id="KW-0999">Mitochondrion inner membrane</keyword>
<keyword id="KW-0539">Nucleus</keyword>
<keyword id="KW-1274">Primary mitochondrial disease</keyword>
<keyword id="KW-1267">Proteomics identification</keyword>
<keyword id="KW-1185">Reference proteome</keyword>
<organism>
    <name type="scientific">Homo sapiens</name>
    <name type="common">Human</name>
    <dbReference type="NCBI Taxonomy" id="9606"/>
    <lineage>
        <taxon>Eukaryota</taxon>
        <taxon>Metazoa</taxon>
        <taxon>Chordata</taxon>
        <taxon>Craniata</taxon>
        <taxon>Vertebrata</taxon>
        <taxon>Euteleostomi</taxon>
        <taxon>Mammalia</taxon>
        <taxon>Eutheria</taxon>
        <taxon>Euarchontoglires</taxon>
        <taxon>Primates</taxon>
        <taxon>Haplorrhini</taxon>
        <taxon>Catarrhini</taxon>
        <taxon>Hominidae</taxon>
        <taxon>Homo</taxon>
    </lineage>
</organism>
<evidence type="ECO:0000250" key="1"/>
<evidence type="ECO:0000269" key="2">
    <source>
    </source>
</evidence>
<evidence type="ECO:0000269" key="3">
    <source>
    </source>
</evidence>
<evidence type="ECO:0000303" key="4">
    <source>
    </source>
</evidence>
<evidence type="ECO:0000305" key="5"/>
<dbReference type="EMBL" id="BC002873">
    <property type="protein sequence ID" value="AAH02873.1"/>
    <property type="molecule type" value="mRNA"/>
</dbReference>
<dbReference type="EMBL" id="BQ652614">
    <property type="status" value="NOT_ANNOTATED_CDS"/>
    <property type="molecule type" value="mRNA"/>
</dbReference>
<dbReference type="CCDS" id="CCDS2784.1">
    <molecule id="Q9BU61-1"/>
</dbReference>
<dbReference type="CCDS" id="CCDS2785.1">
    <molecule id="Q9BU61-2"/>
</dbReference>
<dbReference type="RefSeq" id="NP_951032.1">
    <molecule id="Q9BU61-1"/>
    <property type="nucleotide sequence ID" value="NM_199069.2"/>
</dbReference>
<dbReference type="RefSeq" id="NP_951033.1">
    <molecule id="Q9BU61-2"/>
    <property type="nucleotide sequence ID" value="NM_199070.2"/>
</dbReference>
<dbReference type="RefSeq" id="NP_951047.1">
    <molecule id="Q9BU61-2"/>
    <property type="nucleotide sequence ID" value="NM_199073.2"/>
</dbReference>
<dbReference type="RefSeq" id="NP_951056.1">
    <molecule id="Q9BU61-2"/>
    <property type="nucleotide sequence ID" value="NM_199074.2"/>
</dbReference>
<dbReference type="SMR" id="Q9BU61"/>
<dbReference type="BioGRID" id="117419">
    <property type="interactions" value="127"/>
</dbReference>
<dbReference type="FunCoup" id="Q9BU61">
    <property type="interactions" value="1594"/>
</dbReference>
<dbReference type="IntAct" id="Q9BU61">
    <property type="interactions" value="48"/>
</dbReference>
<dbReference type="MINT" id="Q9BU61"/>
<dbReference type="STRING" id="9606.ENSP00000323076"/>
<dbReference type="BindingDB" id="Q9BU61"/>
<dbReference type="ChEMBL" id="CHEMBL2363065"/>
<dbReference type="DrugCentral" id="Q9BU61"/>
<dbReference type="iPTMnet" id="Q9BU61"/>
<dbReference type="PhosphoSitePlus" id="Q9BU61"/>
<dbReference type="SwissPalm" id="Q9BU61"/>
<dbReference type="BioMuta" id="NDUFAF3"/>
<dbReference type="DMDM" id="74733183"/>
<dbReference type="jPOST" id="Q9BU61"/>
<dbReference type="MassIVE" id="Q9BU61"/>
<dbReference type="PaxDb" id="9606-ENSP00000323076"/>
<dbReference type="PeptideAtlas" id="Q9BU61"/>
<dbReference type="ProteomicsDB" id="79053">
    <molecule id="Q9BU61-1"/>
</dbReference>
<dbReference type="ProteomicsDB" id="79054">
    <molecule id="Q9BU61-2"/>
</dbReference>
<dbReference type="Pumba" id="Q9BU61"/>
<dbReference type="Antibodypedia" id="48697">
    <property type="antibodies" value="69 antibodies from 15 providers"/>
</dbReference>
<dbReference type="DNASU" id="25915"/>
<dbReference type="Ensembl" id="ENST00000326912.8">
    <molecule id="Q9BU61-2"/>
    <property type="protein sequence ID" value="ENSP00000323003.4"/>
    <property type="gene ID" value="ENSG00000178057.15"/>
</dbReference>
<dbReference type="Ensembl" id="ENST00000326925.11">
    <molecule id="Q9BU61-1"/>
    <property type="protein sequence ID" value="ENSP00000323076.5"/>
    <property type="gene ID" value="ENSG00000178057.15"/>
</dbReference>
<dbReference type="Ensembl" id="ENST00000395458.6">
    <molecule id="Q9BU61-2"/>
    <property type="protein sequence ID" value="ENSP00000378843.2"/>
    <property type="gene ID" value="ENSG00000178057.15"/>
</dbReference>
<dbReference type="Ensembl" id="ENST00000451378.2">
    <molecule id="Q9BU61-2"/>
    <property type="protein sequence ID" value="ENSP00000402465.2"/>
    <property type="gene ID" value="ENSG00000178057.15"/>
</dbReference>
<dbReference type="GeneID" id="25915"/>
<dbReference type="KEGG" id="hsa:25915"/>
<dbReference type="MANE-Select" id="ENST00000326925.11">
    <property type="protein sequence ID" value="ENSP00000323076.5"/>
    <property type="RefSeq nucleotide sequence ID" value="NM_199069.2"/>
    <property type="RefSeq protein sequence ID" value="NP_951032.1"/>
</dbReference>
<dbReference type="UCSC" id="uc003cvn.4">
    <molecule id="Q9BU61-1"/>
    <property type="organism name" value="human"/>
</dbReference>
<dbReference type="AGR" id="HGNC:29918"/>
<dbReference type="CTD" id="25915"/>
<dbReference type="DisGeNET" id="25915"/>
<dbReference type="GeneCards" id="NDUFAF3"/>
<dbReference type="HGNC" id="HGNC:29918">
    <property type="gene designation" value="NDUFAF3"/>
</dbReference>
<dbReference type="HPA" id="ENSG00000178057">
    <property type="expression patterns" value="Tissue enhanced (testis)"/>
</dbReference>
<dbReference type="MalaCards" id="NDUFAF3"/>
<dbReference type="MIM" id="612911">
    <property type="type" value="gene"/>
</dbReference>
<dbReference type="MIM" id="618240">
    <property type="type" value="phenotype"/>
</dbReference>
<dbReference type="neXtProt" id="NX_Q9BU61"/>
<dbReference type="OpenTargets" id="ENSG00000178057"/>
<dbReference type="Orphanet" id="2609">
    <property type="disease" value="Isolated complex I deficiency"/>
</dbReference>
<dbReference type="PharmGKB" id="PA164723795"/>
<dbReference type="VEuPathDB" id="HostDB:ENSG00000178057"/>
<dbReference type="eggNOG" id="KOG3363">
    <property type="taxonomic scope" value="Eukaryota"/>
</dbReference>
<dbReference type="GeneTree" id="ENSGT00390000018312"/>
<dbReference type="HOGENOM" id="CLU_074390_3_4_1"/>
<dbReference type="InParanoid" id="Q9BU61"/>
<dbReference type="OMA" id="FSKAYDH"/>
<dbReference type="OrthoDB" id="20681at2759"/>
<dbReference type="PAN-GO" id="Q9BU61">
    <property type="GO annotations" value="2 GO annotations based on evolutionary models"/>
</dbReference>
<dbReference type="PhylomeDB" id="Q9BU61"/>
<dbReference type="TreeFam" id="TF321072"/>
<dbReference type="PathwayCommons" id="Q9BU61"/>
<dbReference type="Reactome" id="R-HSA-6799198">
    <property type="pathway name" value="Complex I biogenesis"/>
</dbReference>
<dbReference type="SignaLink" id="Q9BU61"/>
<dbReference type="BioGRID-ORCS" id="25915">
    <property type="hits" value="320 hits in 1156 CRISPR screens"/>
</dbReference>
<dbReference type="ChiTaRS" id="NDUFAF3">
    <property type="organism name" value="human"/>
</dbReference>
<dbReference type="GeneWiki" id="C3orf60"/>
<dbReference type="GenomeRNAi" id="25915"/>
<dbReference type="Pharos" id="Q9BU61">
    <property type="development level" value="Tclin"/>
</dbReference>
<dbReference type="PRO" id="PR:Q9BU61"/>
<dbReference type="Proteomes" id="UP000005640">
    <property type="component" value="Chromosome 3"/>
</dbReference>
<dbReference type="RNAct" id="Q9BU61">
    <property type="molecule type" value="protein"/>
</dbReference>
<dbReference type="Bgee" id="ENSG00000178057">
    <property type="expression patterns" value="Expressed in left testis and 198 other cell types or tissues"/>
</dbReference>
<dbReference type="ExpressionAtlas" id="Q9BU61">
    <property type="expression patterns" value="baseline and differential"/>
</dbReference>
<dbReference type="GO" id="GO:0005743">
    <property type="term" value="C:mitochondrial inner membrane"/>
    <property type="evidence" value="ECO:0000314"/>
    <property type="project" value="UniProtKB"/>
</dbReference>
<dbReference type="GO" id="GO:0005739">
    <property type="term" value="C:mitochondrion"/>
    <property type="evidence" value="ECO:0006056"/>
    <property type="project" value="FlyBase"/>
</dbReference>
<dbReference type="GO" id="GO:0005634">
    <property type="term" value="C:nucleus"/>
    <property type="evidence" value="ECO:0000314"/>
    <property type="project" value="LIFEdb"/>
</dbReference>
<dbReference type="GO" id="GO:0032981">
    <property type="term" value="P:mitochondrial respiratory chain complex I assembly"/>
    <property type="evidence" value="ECO:0000315"/>
    <property type="project" value="UniProtKB"/>
</dbReference>
<dbReference type="CDD" id="cd05125">
    <property type="entry name" value="Mth938_2P1-like"/>
    <property type="match status" value="1"/>
</dbReference>
<dbReference type="FunFam" id="3.40.1230.10:FF:000002">
    <property type="entry name" value="NADH dehydrogenase [ubiquinone] 1 alpha subcomplex assembly factor 3"/>
    <property type="match status" value="1"/>
</dbReference>
<dbReference type="Gene3D" id="3.40.1230.10">
    <property type="entry name" value="MTH938-like"/>
    <property type="match status" value="1"/>
</dbReference>
<dbReference type="InterPro" id="IPR036748">
    <property type="entry name" value="MTH938-like_sf"/>
</dbReference>
<dbReference type="InterPro" id="IPR034095">
    <property type="entry name" value="NDUF3"/>
</dbReference>
<dbReference type="InterPro" id="IPR007523">
    <property type="entry name" value="NDUFAF3/AAMDC"/>
</dbReference>
<dbReference type="PANTHER" id="PTHR21192:SF2">
    <property type="entry name" value="NADH DEHYDROGENASE [UBIQUINONE] 1 ALPHA SUBCOMPLEX ASSEMBLY FACTOR 3"/>
    <property type="match status" value="1"/>
</dbReference>
<dbReference type="PANTHER" id="PTHR21192">
    <property type="entry name" value="NUCLEAR PROTEIN E3-3"/>
    <property type="match status" value="1"/>
</dbReference>
<dbReference type="Pfam" id="PF04430">
    <property type="entry name" value="DUF498"/>
    <property type="match status" value="1"/>
</dbReference>
<dbReference type="SUPFAM" id="SSF64076">
    <property type="entry name" value="MTH938-like"/>
    <property type="match status" value="1"/>
</dbReference>
<proteinExistence type="evidence at protein level"/>
<accession>Q9BU61</accession>